<name>RL21_SHIDS</name>
<evidence type="ECO:0000255" key="1">
    <source>
        <dbReference type="HAMAP-Rule" id="MF_01363"/>
    </source>
</evidence>
<evidence type="ECO:0000305" key="2"/>
<comment type="function">
    <text evidence="1">This protein binds to 23S rRNA in the presence of protein L20.</text>
</comment>
<comment type="subunit">
    <text evidence="1">Part of the 50S ribosomal subunit. Contacts protein L20.</text>
</comment>
<comment type="similarity">
    <text evidence="1">Belongs to the bacterial ribosomal protein bL21 family.</text>
</comment>
<keyword id="KW-1185">Reference proteome</keyword>
<keyword id="KW-0687">Ribonucleoprotein</keyword>
<keyword id="KW-0689">Ribosomal protein</keyword>
<keyword id="KW-0694">RNA-binding</keyword>
<keyword id="KW-0699">rRNA-binding</keyword>
<proteinExistence type="inferred from homology"/>
<dbReference type="EMBL" id="CP000034">
    <property type="protein sequence ID" value="ABB63358.1"/>
    <property type="molecule type" value="Genomic_DNA"/>
</dbReference>
<dbReference type="RefSeq" id="WP_000271401.1">
    <property type="nucleotide sequence ID" value="NC_007606.1"/>
</dbReference>
<dbReference type="RefSeq" id="YP_404849.1">
    <property type="nucleotide sequence ID" value="NC_007606.1"/>
</dbReference>
<dbReference type="SMR" id="Q32BE7"/>
<dbReference type="STRING" id="300267.SDY_3367"/>
<dbReference type="EnsemblBacteria" id="ABB63358">
    <property type="protein sequence ID" value="ABB63358"/>
    <property type="gene ID" value="SDY_3367"/>
</dbReference>
<dbReference type="GeneID" id="93778795"/>
<dbReference type="KEGG" id="sdy:SDY_3367"/>
<dbReference type="PATRIC" id="fig|300267.13.peg.4021"/>
<dbReference type="HOGENOM" id="CLU_061463_3_3_6"/>
<dbReference type="Proteomes" id="UP000002716">
    <property type="component" value="Chromosome"/>
</dbReference>
<dbReference type="GO" id="GO:0005737">
    <property type="term" value="C:cytoplasm"/>
    <property type="evidence" value="ECO:0007669"/>
    <property type="project" value="UniProtKB-ARBA"/>
</dbReference>
<dbReference type="GO" id="GO:1990904">
    <property type="term" value="C:ribonucleoprotein complex"/>
    <property type="evidence" value="ECO:0007669"/>
    <property type="project" value="UniProtKB-KW"/>
</dbReference>
<dbReference type="GO" id="GO:0005840">
    <property type="term" value="C:ribosome"/>
    <property type="evidence" value="ECO:0007669"/>
    <property type="project" value="UniProtKB-KW"/>
</dbReference>
<dbReference type="GO" id="GO:0019843">
    <property type="term" value="F:rRNA binding"/>
    <property type="evidence" value="ECO:0007669"/>
    <property type="project" value="UniProtKB-UniRule"/>
</dbReference>
<dbReference type="GO" id="GO:0003735">
    <property type="term" value="F:structural constituent of ribosome"/>
    <property type="evidence" value="ECO:0007669"/>
    <property type="project" value="InterPro"/>
</dbReference>
<dbReference type="GO" id="GO:0006412">
    <property type="term" value="P:translation"/>
    <property type="evidence" value="ECO:0007669"/>
    <property type="project" value="UniProtKB-UniRule"/>
</dbReference>
<dbReference type="HAMAP" id="MF_01363">
    <property type="entry name" value="Ribosomal_bL21"/>
    <property type="match status" value="1"/>
</dbReference>
<dbReference type="InterPro" id="IPR028909">
    <property type="entry name" value="bL21-like"/>
</dbReference>
<dbReference type="InterPro" id="IPR036164">
    <property type="entry name" value="bL21-like_sf"/>
</dbReference>
<dbReference type="InterPro" id="IPR001787">
    <property type="entry name" value="Ribosomal_bL21"/>
</dbReference>
<dbReference type="InterPro" id="IPR018258">
    <property type="entry name" value="Ribosomal_bL21_CS"/>
</dbReference>
<dbReference type="NCBIfam" id="TIGR00061">
    <property type="entry name" value="L21"/>
    <property type="match status" value="1"/>
</dbReference>
<dbReference type="PANTHER" id="PTHR21349">
    <property type="entry name" value="50S RIBOSOMAL PROTEIN L21"/>
    <property type="match status" value="1"/>
</dbReference>
<dbReference type="PANTHER" id="PTHR21349:SF0">
    <property type="entry name" value="LARGE RIBOSOMAL SUBUNIT PROTEIN BL21M"/>
    <property type="match status" value="1"/>
</dbReference>
<dbReference type="Pfam" id="PF00829">
    <property type="entry name" value="Ribosomal_L21p"/>
    <property type="match status" value="1"/>
</dbReference>
<dbReference type="SUPFAM" id="SSF141091">
    <property type="entry name" value="L21p-like"/>
    <property type="match status" value="1"/>
</dbReference>
<dbReference type="PROSITE" id="PS01169">
    <property type="entry name" value="RIBOSOMAL_L21"/>
    <property type="match status" value="1"/>
</dbReference>
<accession>Q32BE7</accession>
<organism>
    <name type="scientific">Shigella dysenteriae serotype 1 (strain Sd197)</name>
    <dbReference type="NCBI Taxonomy" id="300267"/>
    <lineage>
        <taxon>Bacteria</taxon>
        <taxon>Pseudomonadati</taxon>
        <taxon>Pseudomonadota</taxon>
        <taxon>Gammaproteobacteria</taxon>
        <taxon>Enterobacterales</taxon>
        <taxon>Enterobacteriaceae</taxon>
        <taxon>Shigella</taxon>
    </lineage>
</organism>
<protein>
    <recommendedName>
        <fullName evidence="1">Large ribosomal subunit protein bL21</fullName>
    </recommendedName>
    <alternativeName>
        <fullName evidence="2">50S ribosomal protein L21</fullName>
    </alternativeName>
</protein>
<feature type="chain" id="PRO_0000269380" description="Large ribosomal subunit protein bL21">
    <location>
        <begin position="1"/>
        <end position="103"/>
    </location>
</feature>
<gene>
    <name evidence="1" type="primary">rplU</name>
    <name type="ordered locus">SDY_3367</name>
</gene>
<sequence length="103" mass="11564">MYAVFQSGGKQHRVSEGQTVRLEKLDIATGETVEFAEVLMIANGEEVKIGVPFVDGGVIKAEVVAHGRGEKVKIVKFRRRKHYRKQQGHRQWFTDVKITGISA</sequence>
<reference key="1">
    <citation type="journal article" date="2005" name="Nucleic Acids Res.">
        <title>Genome dynamics and diversity of Shigella species, the etiologic agents of bacillary dysentery.</title>
        <authorList>
            <person name="Yang F."/>
            <person name="Yang J."/>
            <person name="Zhang X."/>
            <person name="Chen L."/>
            <person name="Jiang Y."/>
            <person name="Yan Y."/>
            <person name="Tang X."/>
            <person name="Wang J."/>
            <person name="Xiong Z."/>
            <person name="Dong J."/>
            <person name="Xue Y."/>
            <person name="Zhu Y."/>
            <person name="Xu X."/>
            <person name="Sun L."/>
            <person name="Chen S."/>
            <person name="Nie H."/>
            <person name="Peng J."/>
            <person name="Xu J."/>
            <person name="Wang Y."/>
            <person name="Yuan Z."/>
            <person name="Wen Y."/>
            <person name="Yao Z."/>
            <person name="Shen Y."/>
            <person name="Qiang B."/>
            <person name="Hou Y."/>
            <person name="Yu J."/>
            <person name="Jin Q."/>
        </authorList>
    </citation>
    <scope>NUCLEOTIDE SEQUENCE [LARGE SCALE GENOMIC DNA]</scope>
    <source>
        <strain>Sd197</strain>
    </source>
</reference>